<feature type="chain" id="PRO_1000148924" description="Imidazole glycerol phosphate synthase subunit HisF">
    <location>
        <begin position="1"/>
        <end position="254"/>
    </location>
</feature>
<feature type="active site" evidence="1">
    <location>
        <position position="11"/>
    </location>
</feature>
<feature type="active site" evidence="1">
    <location>
        <position position="130"/>
    </location>
</feature>
<gene>
    <name evidence="1" type="primary">hisF</name>
    <name type="ordered locus">LHK_00190</name>
</gene>
<keyword id="KW-0028">Amino-acid biosynthesis</keyword>
<keyword id="KW-0963">Cytoplasm</keyword>
<keyword id="KW-0368">Histidine biosynthesis</keyword>
<keyword id="KW-0456">Lyase</keyword>
<keyword id="KW-1185">Reference proteome</keyword>
<sequence length="254" mass="27141">MLAKRIIPCLDVTAGRVVKGVNFVGLRDAGDPVEIARRYNEQGADELTFLDITASSDARDIILHVIEAVAEQVFIPLTVGGGVRQVEDVRRLLNAGADKVSINTSAVTHPELVAEAAGRFGSQAIVVAVDAKAVTPDNDRWEVFTHGGRKPTGLDAVEWARKMQELGAGEILLTSMDRDGTRIGFNLALTRAVSDAVDIPVIASGGVGNLQHLVDGIKEGHADAVLAASIFHFGDYTVRQAKELMQSQGIEVRL</sequence>
<proteinExistence type="inferred from homology"/>
<reference key="1">
    <citation type="journal article" date="2009" name="PLoS Genet.">
        <title>The complete genome and proteome of Laribacter hongkongensis reveal potential mechanisms for adaptations to different temperatures and habitats.</title>
        <authorList>
            <person name="Woo P.C.Y."/>
            <person name="Lau S.K.P."/>
            <person name="Tse H."/>
            <person name="Teng J.L.L."/>
            <person name="Curreem S.O."/>
            <person name="Tsang A.K.L."/>
            <person name="Fan R.Y.Y."/>
            <person name="Wong G.K.M."/>
            <person name="Huang Y."/>
            <person name="Loman N.J."/>
            <person name="Snyder L.A.S."/>
            <person name="Cai J.J."/>
            <person name="Huang J.-D."/>
            <person name="Mak W."/>
            <person name="Pallen M.J."/>
            <person name="Lok S."/>
            <person name="Yuen K.-Y."/>
        </authorList>
    </citation>
    <scope>NUCLEOTIDE SEQUENCE [LARGE SCALE GENOMIC DNA]</scope>
    <source>
        <strain>HLHK9</strain>
    </source>
</reference>
<organism>
    <name type="scientific">Laribacter hongkongensis (strain HLHK9)</name>
    <dbReference type="NCBI Taxonomy" id="557598"/>
    <lineage>
        <taxon>Bacteria</taxon>
        <taxon>Pseudomonadati</taxon>
        <taxon>Pseudomonadota</taxon>
        <taxon>Betaproteobacteria</taxon>
        <taxon>Neisseriales</taxon>
        <taxon>Aquaspirillaceae</taxon>
        <taxon>Laribacter</taxon>
    </lineage>
</organism>
<accession>C1DAK5</accession>
<evidence type="ECO:0000255" key="1">
    <source>
        <dbReference type="HAMAP-Rule" id="MF_01013"/>
    </source>
</evidence>
<name>HIS6_LARHH</name>
<protein>
    <recommendedName>
        <fullName evidence="1">Imidazole glycerol phosphate synthase subunit HisF</fullName>
        <ecNumber evidence="1">4.3.2.10</ecNumber>
    </recommendedName>
    <alternativeName>
        <fullName evidence="1">IGP synthase cyclase subunit</fullName>
    </alternativeName>
    <alternativeName>
        <fullName evidence="1">IGP synthase subunit HisF</fullName>
    </alternativeName>
    <alternativeName>
        <fullName evidence="1">ImGP synthase subunit HisF</fullName>
        <shortName evidence="1">IGPS subunit HisF</shortName>
    </alternativeName>
</protein>
<comment type="function">
    <text evidence="1">IGPS catalyzes the conversion of PRFAR and glutamine to IGP, AICAR and glutamate. The HisF subunit catalyzes the cyclization activity that produces IGP and AICAR from PRFAR using the ammonia provided by the HisH subunit.</text>
</comment>
<comment type="catalytic activity">
    <reaction evidence="1">
        <text>5-[(5-phospho-1-deoxy-D-ribulos-1-ylimino)methylamino]-1-(5-phospho-beta-D-ribosyl)imidazole-4-carboxamide + L-glutamine = D-erythro-1-(imidazol-4-yl)glycerol 3-phosphate + 5-amino-1-(5-phospho-beta-D-ribosyl)imidazole-4-carboxamide + L-glutamate + H(+)</text>
        <dbReference type="Rhea" id="RHEA:24793"/>
        <dbReference type="ChEBI" id="CHEBI:15378"/>
        <dbReference type="ChEBI" id="CHEBI:29985"/>
        <dbReference type="ChEBI" id="CHEBI:58278"/>
        <dbReference type="ChEBI" id="CHEBI:58359"/>
        <dbReference type="ChEBI" id="CHEBI:58475"/>
        <dbReference type="ChEBI" id="CHEBI:58525"/>
        <dbReference type="EC" id="4.3.2.10"/>
    </reaction>
</comment>
<comment type="pathway">
    <text evidence="1">Amino-acid biosynthesis; L-histidine biosynthesis; L-histidine from 5-phospho-alpha-D-ribose 1-diphosphate: step 5/9.</text>
</comment>
<comment type="subunit">
    <text evidence="1">Heterodimer of HisH and HisF.</text>
</comment>
<comment type="subcellular location">
    <subcellularLocation>
        <location evidence="1">Cytoplasm</location>
    </subcellularLocation>
</comment>
<comment type="similarity">
    <text evidence="1">Belongs to the HisA/HisF family.</text>
</comment>
<dbReference type="EC" id="4.3.2.10" evidence="1"/>
<dbReference type="EMBL" id="CP001154">
    <property type="protein sequence ID" value="ACO73186.1"/>
    <property type="molecule type" value="Genomic_DNA"/>
</dbReference>
<dbReference type="RefSeq" id="WP_012695681.1">
    <property type="nucleotide sequence ID" value="NC_012559.1"/>
</dbReference>
<dbReference type="SMR" id="C1DAK5"/>
<dbReference type="STRING" id="557598.LHK_00190"/>
<dbReference type="GeneID" id="75109541"/>
<dbReference type="KEGG" id="lhk:LHK_00190"/>
<dbReference type="eggNOG" id="COG0107">
    <property type="taxonomic scope" value="Bacteria"/>
</dbReference>
<dbReference type="HOGENOM" id="CLU_048577_4_0_4"/>
<dbReference type="UniPathway" id="UPA00031">
    <property type="reaction ID" value="UER00010"/>
</dbReference>
<dbReference type="Proteomes" id="UP000002010">
    <property type="component" value="Chromosome"/>
</dbReference>
<dbReference type="GO" id="GO:0005737">
    <property type="term" value="C:cytoplasm"/>
    <property type="evidence" value="ECO:0007669"/>
    <property type="project" value="UniProtKB-SubCell"/>
</dbReference>
<dbReference type="GO" id="GO:0000107">
    <property type="term" value="F:imidazoleglycerol-phosphate synthase activity"/>
    <property type="evidence" value="ECO:0007669"/>
    <property type="project" value="UniProtKB-UniRule"/>
</dbReference>
<dbReference type="GO" id="GO:0016829">
    <property type="term" value="F:lyase activity"/>
    <property type="evidence" value="ECO:0007669"/>
    <property type="project" value="UniProtKB-KW"/>
</dbReference>
<dbReference type="GO" id="GO:0000105">
    <property type="term" value="P:L-histidine biosynthetic process"/>
    <property type="evidence" value="ECO:0007669"/>
    <property type="project" value="UniProtKB-UniRule"/>
</dbReference>
<dbReference type="CDD" id="cd04731">
    <property type="entry name" value="HisF"/>
    <property type="match status" value="1"/>
</dbReference>
<dbReference type="FunFam" id="3.20.20.70:FF:000006">
    <property type="entry name" value="Imidazole glycerol phosphate synthase subunit HisF"/>
    <property type="match status" value="1"/>
</dbReference>
<dbReference type="Gene3D" id="3.20.20.70">
    <property type="entry name" value="Aldolase class I"/>
    <property type="match status" value="1"/>
</dbReference>
<dbReference type="HAMAP" id="MF_01013">
    <property type="entry name" value="HisF"/>
    <property type="match status" value="1"/>
</dbReference>
<dbReference type="InterPro" id="IPR013785">
    <property type="entry name" value="Aldolase_TIM"/>
</dbReference>
<dbReference type="InterPro" id="IPR006062">
    <property type="entry name" value="His_biosynth"/>
</dbReference>
<dbReference type="InterPro" id="IPR004651">
    <property type="entry name" value="HisF"/>
</dbReference>
<dbReference type="InterPro" id="IPR050064">
    <property type="entry name" value="IGPS_HisA/HisF"/>
</dbReference>
<dbReference type="InterPro" id="IPR011060">
    <property type="entry name" value="RibuloseP-bd_barrel"/>
</dbReference>
<dbReference type="NCBIfam" id="TIGR00735">
    <property type="entry name" value="hisF"/>
    <property type="match status" value="1"/>
</dbReference>
<dbReference type="PANTHER" id="PTHR21235:SF2">
    <property type="entry name" value="IMIDAZOLE GLYCEROL PHOSPHATE SYNTHASE HISHF"/>
    <property type="match status" value="1"/>
</dbReference>
<dbReference type="PANTHER" id="PTHR21235">
    <property type="entry name" value="IMIDAZOLE GLYCEROL PHOSPHATE SYNTHASE SUBUNIT HISF/H IGP SYNTHASE SUBUNIT HISF/H"/>
    <property type="match status" value="1"/>
</dbReference>
<dbReference type="Pfam" id="PF00977">
    <property type="entry name" value="His_biosynth"/>
    <property type="match status" value="1"/>
</dbReference>
<dbReference type="SUPFAM" id="SSF51366">
    <property type="entry name" value="Ribulose-phoshate binding barrel"/>
    <property type="match status" value="1"/>
</dbReference>